<accession>Q8UUI0</accession>
<evidence type="ECO:0000250" key="1"/>
<evidence type="ECO:0000255" key="2"/>
<evidence type="ECO:0000255" key="3">
    <source>
        <dbReference type="PROSITE-ProRule" id="PRU10035"/>
    </source>
</evidence>
<evidence type="ECO:0000255" key="4">
    <source>
        <dbReference type="PROSITE-ProRule" id="PRU10036"/>
    </source>
</evidence>
<evidence type="ECO:0000305" key="5"/>
<keyword id="KW-0106">Calcium</keyword>
<keyword id="KW-1015">Disulfide bond</keyword>
<keyword id="KW-0378">Hydrolase</keyword>
<keyword id="KW-0442">Lipid degradation</keyword>
<keyword id="KW-0443">Lipid metabolism</keyword>
<keyword id="KW-0479">Metal-binding</keyword>
<keyword id="KW-0528">Neurotoxin</keyword>
<keyword id="KW-0638">Presynaptic neurotoxin</keyword>
<keyword id="KW-0964">Secreted</keyword>
<keyword id="KW-0732">Signal</keyword>
<keyword id="KW-0800">Toxin</keyword>
<proteinExistence type="inferred from homology"/>
<name>PA2B1_LATCO</name>
<reference key="1">
    <citation type="journal article" date="2002" name="Toxicon">
        <title>A comparative analysis of invaded sequences from group IA phospholipase A(2) genes provides evidence about the divergence period of genes groups and snake families.</title>
        <authorList>
            <person name="Fujimi T.J."/>
            <person name="Tsuchiya T."/>
            <person name="Tamiya T."/>
        </authorList>
    </citation>
    <scope>NUCLEOTIDE SEQUENCE [GENOMIC DNA]</scope>
    <source>
        <tissue>Liver</tissue>
    </source>
</reference>
<sequence length="155" mass="17165">MYPAHLLVLLAVCVSLLGASAISNRPRNLVQFSELIQCVNKGKRATYHYMDYGCYCGKGGSGTPVDALDRCCKTHDDCYGQAEKKGCFPLLSLYNFACFPGAPQCGKGNTCQRFVCACDLKAALCFAKSPYNNNNYNIDIKKKCQTLIYMRLQTQ</sequence>
<comment type="function">
    <text evidence="1">Snake venom phospholipase A2 (PLA2) that inhibits neuromuscular transmission by blocking acetylcholine release from the nerve termini. PLA2 catalyzes the calcium-dependent hydrolysis of the 2-acyl groups in 3-sn-phosphoglycerides (By similarity).</text>
</comment>
<comment type="catalytic activity">
    <reaction evidence="3 4">
        <text>a 1,2-diacyl-sn-glycero-3-phosphocholine + H2O = a 1-acyl-sn-glycero-3-phosphocholine + a fatty acid + H(+)</text>
        <dbReference type="Rhea" id="RHEA:15801"/>
        <dbReference type="ChEBI" id="CHEBI:15377"/>
        <dbReference type="ChEBI" id="CHEBI:15378"/>
        <dbReference type="ChEBI" id="CHEBI:28868"/>
        <dbReference type="ChEBI" id="CHEBI:57643"/>
        <dbReference type="ChEBI" id="CHEBI:58168"/>
        <dbReference type="EC" id="3.1.1.4"/>
    </reaction>
</comment>
<comment type="cofactor">
    <cofactor evidence="1">
        <name>Ca(2+)</name>
        <dbReference type="ChEBI" id="CHEBI:29108"/>
    </cofactor>
    <text evidence="1">Binds 1 Ca(2+) ion.</text>
</comment>
<comment type="subcellular location">
    <subcellularLocation>
        <location evidence="1">Secreted</location>
    </subcellularLocation>
</comment>
<comment type="tissue specificity">
    <text>Expressed by the venom gland.</text>
</comment>
<comment type="similarity">
    <text evidence="5">Belongs to the phospholipase A2 family. Group I subfamily. D49 sub-subfamily.</text>
</comment>
<organism>
    <name type="scientific">Laticauda colubrina</name>
    <name type="common">Yellow-lipped sea krait</name>
    <name type="synonym">Banded sea krait</name>
    <dbReference type="NCBI Taxonomy" id="8628"/>
    <lineage>
        <taxon>Eukaryota</taxon>
        <taxon>Metazoa</taxon>
        <taxon>Chordata</taxon>
        <taxon>Craniata</taxon>
        <taxon>Vertebrata</taxon>
        <taxon>Euteleostomi</taxon>
        <taxon>Lepidosauria</taxon>
        <taxon>Squamata</taxon>
        <taxon>Bifurcata</taxon>
        <taxon>Unidentata</taxon>
        <taxon>Episquamata</taxon>
        <taxon>Toxicofera</taxon>
        <taxon>Serpentes</taxon>
        <taxon>Colubroidea</taxon>
        <taxon>Elapidae</taxon>
        <taxon>Laticaudinae</taxon>
        <taxon>Laticauda</taxon>
    </lineage>
</organism>
<feature type="signal peptide" evidence="2">
    <location>
        <begin position="1"/>
        <end position="21"/>
    </location>
</feature>
<feature type="propeptide" id="PRO_0000022878" evidence="1">
    <location>
        <begin position="22"/>
        <end position="27"/>
    </location>
</feature>
<feature type="chain" id="PRO_0000022879" description="Basic phospholipase A2 PC1">
    <location>
        <begin position="28"/>
        <end position="155"/>
    </location>
</feature>
<feature type="active site" evidence="1">
    <location>
        <position position="75"/>
    </location>
</feature>
<feature type="active site" evidence="1">
    <location>
        <position position="119"/>
    </location>
</feature>
<feature type="binding site" evidence="1">
    <location>
        <position position="55"/>
    </location>
    <ligand>
        <name>Ca(2+)</name>
        <dbReference type="ChEBI" id="CHEBI:29108"/>
    </ligand>
</feature>
<feature type="binding site" evidence="1">
    <location>
        <position position="57"/>
    </location>
    <ligand>
        <name>Ca(2+)</name>
        <dbReference type="ChEBI" id="CHEBI:29108"/>
    </ligand>
</feature>
<feature type="binding site" evidence="1">
    <location>
        <position position="59"/>
    </location>
    <ligand>
        <name>Ca(2+)</name>
        <dbReference type="ChEBI" id="CHEBI:29108"/>
    </ligand>
</feature>
<feature type="binding site" evidence="1">
    <location>
        <position position="76"/>
    </location>
    <ligand>
        <name>Ca(2+)</name>
        <dbReference type="ChEBI" id="CHEBI:29108"/>
    </ligand>
</feature>
<feature type="disulfide bond" evidence="1">
    <location>
        <begin position="38"/>
        <end position="98"/>
    </location>
</feature>
<feature type="disulfide bond" evidence="1">
    <location>
        <begin position="54"/>
        <end position="144"/>
    </location>
</feature>
<feature type="disulfide bond" evidence="1">
    <location>
        <begin position="56"/>
        <end position="72"/>
    </location>
</feature>
<feature type="disulfide bond" evidence="1">
    <location>
        <begin position="71"/>
        <end position="125"/>
    </location>
</feature>
<feature type="disulfide bond" evidence="1">
    <location>
        <begin position="78"/>
        <end position="118"/>
    </location>
</feature>
<feature type="disulfide bond" evidence="1">
    <location>
        <begin position="87"/>
        <end position="111"/>
    </location>
</feature>
<feature type="disulfide bond" evidence="1">
    <location>
        <begin position="105"/>
        <end position="116"/>
    </location>
</feature>
<protein>
    <recommendedName>
        <fullName>Basic phospholipase A2 PC1</fullName>
        <shortName>svPLA2</shortName>
        <ecNumber>3.1.1.4</ecNumber>
    </recommendedName>
    <alternativeName>
        <fullName>Phosphatidylcholine 2-acylhydrolase</fullName>
    </alternativeName>
</protein>
<dbReference type="EC" id="3.1.1.4"/>
<dbReference type="EMBL" id="AB062445">
    <property type="protein sequence ID" value="BAB72252.1"/>
    <property type="molecule type" value="Genomic_DNA"/>
</dbReference>
<dbReference type="SMR" id="Q8UUI0"/>
<dbReference type="GO" id="GO:0005576">
    <property type="term" value="C:extracellular region"/>
    <property type="evidence" value="ECO:0007669"/>
    <property type="project" value="UniProtKB-SubCell"/>
</dbReference>
<dbReference type="GO" id="GO:0005509">
    <property type="term" value="F:calcium ion binding"/>
    <property type="evidence" value="ECO:0007669"/>
    <property type="project" value="InterPro"/>
</dbReference>
<dbReference type="GO" id="GO:0047498">
    <property type="term" value="F:calcium-dependent phospholipase A2 activity"/>
    <property type="evidence" value="ECO:0007669"/>
    <property type="project" value="TreeGrafter"/>
</dbReference>
<dbReference type="GO" id="GO:0005543">
    <property type="term" value="F:phospholipid binding"/>
    <property type="evidence" value="ECO:0007669"/>
    <property type="project" value="TreeGrafter"/>
</dbReference>
<dbReference type="GO" id="GO:0090729">
    <property type="term" value="F:toxin activity"/>
    <property type="evidence" value="ECO:0007669"/>
    <property type="project" value="UniProtKB-KW"/>
</dbReference>
<dbReference type="GO" id="GO:0050482">
    <property type="term" value="P:arachidonate secretion"/>
    <property type="evidence" value="ECO:0007669"/>
    <property type="project" value="InterPro"/>
</dbReference>
<dbReference type="GO" id="GO:0016042">
    <property type="term" value="P:lipid catabolic process"/>
    <property type="evidence" value="ECO:0007669"/>
    <property type="project" value="UniProtKB-KW"/>
</dbReference>
<dbReference type="GO" id="GO:0006644">
    <property type="term" value="P:phospholipid metabolic process"/>
    <property type="evidence" value="ECO:0007669"/>
    <property type="project" value="InterPro"/>
</dbReference>
<dbReference type="CDD" id="cd00125">
    <property type="entry name" value="PLA2c"/>
    <property type="match status" value="1"/>
</dbReference>
<dbReference type="FunFam" id="1.20.90.10:FF:000007">
    <property type="entry name" value="Acidic phospholipase A2"/>
    <property type="match status" value="1"/>
</dbReference>
<dbReference type="Gene3D" id="1.20.90.10">
    <property type="entry name" value="Phospholipase A2 domain"/>
    <property type="match status" value="1"/>
</dbReference>
<dbReference type="InterPro" id="IPR001211">
    <property type="entry name" value="PLipase_A2"/>
</dbReference>
<dbReference type="InterPro" id="IPR033112">
    <property type="entry name" value="PLipase_A2_Asp_AS"/>
</dbReference>
<dbReference type="InterPro" id="IPR016090">
    <property type="entry name" value="PLipase_A2_dom"/>
</dbReference>
<dbReference type="InterPro" id="IPR036444">
    <property type="entry name" value="PLipase_A2_dom_sf"/>
</dbReference>
<dbReference type="InterPro" id="IPR033113">
    <property type="entry name" value="PLipase_A2_His_AS"/>
</dbReference>
<dbReference type="PANTHER" id="PTHR11716:SF106">
    <property type="entry name" value="PHOSPHOLIPASE A2 A2-ACTITOXIN-UCS2A-LIKE"/>
    <property type="match status" value="1"/>
</dbReference>
<dbReference type="PANTHER" id="PTHR11716">
    <property type="entry name" value="PHOSPHOLIPASE A2 FAMILY MEMBER"/>
    <property type="match status" value="1"/>
</dbReference>
<dbReference type="Pfam" id="PF00068">
    <property type="entry name" value="Phospholip_A2_1"/>
    <property type="match status" value="1"/>
</dbReference>
<dbReference type="PRINTS" id="PR00389">
    <property type="entry name" value="PHPHLIPASEA2"/>
</dbReference>
<dbReference type="SMART" id="SM00085">
    <property type="entry name" value="PA2c"/>
    <property type="match status" value="1"/>
</dbReference>
<dbReference type="SUPFAM" id="SSF48619">
    <property type="entry name" value="Phospholipase A2, PLA2"/>
    <property type="match status" value="1"/>
</dbReference>
<dbReference type="PROSITE" id="PS00119">
    <property type="entry name" value="PA2_ASP"/>
    <property type="match status" value="1"/>
</dbReference>
<dbReference type="PROSITE" id="PS00118">
    <property type="entry name" value="PA2_HIS"/>
    <property type="match status" value="1"/>
</dbReference>